<reference key="1">
    <citation type="journal article" date="1999" name="Bioorg. Khim.">
        <title>Cloning and structure of gene encoded alpha-latrocrustoxin from the Black widow spider venom.</title>
        <authorList>
            <person name="Danilevich V.N."/>
            <person name="Luk'ianov S.A."/>
            <person name="Grishin E.V."/>
        </authorList>
    </citation>
    <scope>NUCLEOTIDE SEQUENCE [GENOMIC DNA]</scope>
</reference>
<reference key="2">
    <citation type="journal article" date="2000" name="Bioorg. Khim.">
        <title>The chromosomal genes for black widow spider neurotoxins do not contain introns.</title>
        <authorList>
            <person name="Danilevich V.N."/>
            <person name="Grishin E.V."/>
        </authorList>
    </citation>
    <scope>NUCLEOTIDE SEQUENCE [GENOMIC DNA]</scope>
</reference>
<reference key="3">
    <citation type="journal article" date="1999" name="Bioorg. Khim.">
        <title>Molecular cloning and primary structure of cDNA fragment for alpha-latrocrustatoxin from black widow spider venom.</title>
        <authorList>
            <person name="Volynskii K.E."/>
            <person name="Volkova T.M."/>
            <person name="Galkina T.G."/>
            <person name="Krasnoperov V.G."/>
            <person name="Pluzhnikov K.A."/>
            <person name="Khvoshchev M.V."/>
            <person name="Grishin E.V."/>
        </authorList>
    </citation>
    <scope>PARTIAL NUCLEOTIDE SEQUENCE [MRNA]</scope>
    <source>
        <tissue>Venom gland</tissue>
    </source>
</reference>
<reference key="4">
    <citation type="journal article" date="1998" name="Toxicon">
        <title>Black widow spider toxins: the present and the future.</title>
        <authorList>
            <person name="Grishin E.V."/>
        </authorList>
    </citation>
    <scope>TOXIC DOSE</scope>
</reference>
<reference key="5">
    <citation type="journal article" date="2021" name="Nat. Commun.">
        <title>Molecular architecture of black widow spider neurotoxins.</title>
        <authorList>
            <person name="Chen M."/>
            <person name="Blum D."/>
            <person name="Engelhard L."/>
            <person name="Raunser S."/>
            <person name="Wagner R."/>
            <person name="Gatsogiannis C."/>
        </authorList>
    </citation>
    <scope>STRUCTURE BY ELECTRON MICROSCOPY (4.03 ANGSTROMS) OF 48-1066 IN MONOMERIC FORM</scope>
    <scope>FUNCTION</scope>
    <scope>RECOMBINANT EXPRESSION</scope>
    <scope>SUBUNIT</scope>
</reference>
<sequence>VSIFIFHFSANILVRNSEMKGKRVISKREMSKADQCTFLSYQSVAYGTLGDVAGDVSSIEGADLVATPIAAGGHLAKGATDAAMIAMDCSSIPFDEIKQQLNQRFNEVDKKLQKGAEALENVTELAEKTYSSVEKMRVEMREGFNHVIATIENANTKQIITGINQIIQYFNDERENINNRQKEDYVAKLQEPASGNFLLYLRKSRTSEDGSLHSLLFKIINQELAIPNNAADNNAIRALFALFYGTQTFISIMFYLVKQYSYLADYHYQNGNLAEFNSNFDHMKTVFQDFKFTLIGINTSNSKPLVNTVLSIIEDVKNKRFIRNLRSNLYQKIIKSTKSLLDLREKITKMDLPIIEDTPKSSVLINFREKSSSVPRIETPILKWTPGTVVKYAIQYEQDGKYSKISKWSNPITVQRLANPYITIDKDRRNRLVFRQFGNEKPELISILDSSQNEFRDIHRDLYNAAQMPYKETALGICRKLIDSGAQVGASFEMGRKSIHASATAGNDDVARLLLAKNNGLLNVPDKNGYTPLHIASERKNNDFVKFLLEKGADVNVRTFANELTPLHLAARQDFTIIVKTLMEKRGIDVNAKERAGFTPLHLSITSNSRAARTLINETPAGINIKSNSGLTPLHLAVLQNNLSAAKVLVKSNKKVKLNEMDNNGMTPLHYASMLGNLEFVKYFTSEQGIDVNAKTKVKNWTPLHLAILFKKFDVAQSLLQVRNIDISTRADQAITPLHLAAATGNSQIVKTILNSGAVVDQETANGFTALHLAIMNPNTETPQFLIAKGANINAKTNDGSTPLHFAAALGKTNIFQLLMDKGANIKAENLINQMPIHEAVVNGHLAIVKMLIEQDSSLMNAKNMRDEYPFYLAAEKRYKDVFNYLESKGADVNEKNNDGNTLLHLFSINGEVEVVQFLIQNGADFRLRNKERKSFFDLAVEFGHAGIVGYAIEENKVDLQEPYRGKTILYHAICDSVKYDRIEVVRYFVETLNEDQCSPLQEAAAYAHLDLVKYFVQERGINPTAFNNDNQVSPLCIAIVGAPCGFVKSCDTPERLDVVEYLVDKTPDINKECDTQQSTPVSSAVYGNKVSILNYLIRNGADPNKKVRGDPPLFIAAMIGQYDIVKSLVEQHKIDVNTRNKEQFTPLHAAASNDHIDVVKYLIQKGADVNAKGDENLKPIDLAGEKSKAYLRSLGRRFFRNESPSKSFEIDKFNAIMPEVSMSGKVSHDSNFIQHISSGTRSKSNFNSAKNKMYAENSHVRSIDVNGALLLLDFMVRVFSNRKMNYAASISGIKSRSNSEAQAEALILTERFEHLLNALIADQSIDSLDFSNVHSRIYKAIINGNPNGISEMLCSYAKEYSELDPEKIEKLLQEFETLTFTKSSEIQINEKFSHALFETCGLNRPTNVLQIK</sequence>
<organism>
    <name type="scientific">Latrodectus tredecimguttatus</name>
    <name type="common">Mediterranean black widow spider</name>
    <name type="synonym">Latrodectus mactans tredecimguttatus</name>
    <dbReference type="NCBI Taxonomy" id="6925"/>
    <lineage>
        <taxon>Eukaryota</taxon>
        <taxon>Metazoa</taxon>
        <taxon>Ecdysozoa</taxon>
        <taxon>Arthropoda</taxon>
        <taxon>Chelicerata</taxon>
        <taxon>Arachnida</taxon>
        <taxon>Araneae</taxon>
        <taxon>Araneomorphae</taxon>
        <taxon>Entelegynae</taxon>
        <taxon>Araneoidea</taxon>
        <taxon>Theridiidae</taxon>
        <taxon>Latrodectus</taxon>
    </lineage>
</organism>
<proteinExistence type="evidence at protein level"/>
<evidence type="ECO:0000250" key="1">
    <source>
        <dbReference type="UniProtKB" id="P23631"/>
    </source>
</evidence>
<evidence type="ECO:0000255" key="2"/>
<evidence type="ECO:0000269" key="3">
    <source>
    </source>
</evidence>
<evidence type="ECO:0000269" key="4">
    <source>
    </source>
</evidence>
<evidence type="ECO:0000303" key="5">
    <source>
    </source>
</evidence>
<evidence type="ECO:0000305" key="6"/>
<evidence type="ECO:0000305" key="7">
    <source>
    </source>
</evidence>
<evidence type="ECO:0000305" key="8">
    <source>
    </source>
</evidence>
<comment type="function">
    <text evidence="1 3">Crustacean-selective presynaptic neurotoxin that induces neurotransmitter exocytosis. May bind to crustacean neurexin-1 homolog, adhesion G protein-coupled receptor L1 homolog, and receptor-type tyrosine-protein phosphatase S homolog, and induces neurotransmitter exocytosis both by forming tetrameric pores in membranes and signaling via G protein-coupled receptor (By similarity) (PubMed:34845192). This recombinant protein form channels in artificial membrane bilayers, that are stabilized by calcium ions and allow calcium flux at negative membrane potentials (PubMed:34845192).</text>
</comment>
<comment type="subunit">
    <text evidence="3">Homotetramer in membranes.</text>
</comment>
<comment type="subcellular location">
    <subcellularLocation>
        <location evidence="7">Secreted</location>
    </subcellularLocation>
    <subcellularLocation>
        <location evidence="3">Target cell membrane</location>
    </subcellularLocation>
    <text evidence="3">Forms a membrane channel in the prey.</text>
</comment>
<comment type="tissue specificity">
    <text evidence="7">Expressed by the venom gland.</text>
</comment>
<comment type="domain">
    <text evidence="3">The H8 helix is predicted to insert into membranes and form pores by assembling into tetramers. The helix is contained within a helical bundle domain that undergoes significant conformational changes during pore formation to allow exposure of the H8 transmembrane helix and transition of the toxin from a soluble monomer to a transmembrane tetramer.</text>
</comment>
<comment type="toxic dose">
    <text evidence="4">LD(50) is 100 ug/kg to the crayfish Procambarus cubensis.</text>
</comment>
<comment type="similarity">
    <text evidence="6">Belongs to the cationic peptide 01 (latrotoxin) family. 01 (alpha-latrocrustotoxin) subfamily.</text>
</comment>
<feature type="propeptide" id="PRO_0000391353" evidence="6">
    <location>
        <begin position="1" status="less than"/>
        <end position="28"/>
    </location>
</feature>
<feature type="chain" id="PRO_0000067053" description="Alpha-latrocrustotoxin-Lt1a" evidence="6">
    <location>
        <begin position="29"/>
        <end position="1192"/>
    </location>
</feature>
<feature type="propeptide" id="PRO_0000391354" evidence="6">
    <location>
        <begin position="1193"/>
        <end position="1413"/>
    </location>
</feature>
<feature type="repeat" description="ANK 1" evidence="2">
    <location>
        <begin position="457"/>
        <end position="490"/>
    </location>
</feature>
<feature type="repeat" description="ANK 2" evidence="2">
    <location>
        <begin position="494"/>
        <end position="524"/>
    </location>
</feature>
<feature type="repeat" description="ANK 3" evidence="2">
    <location>
        <begin position="528"/>
        <end position="557"/>
    </location>
</feature>
<feature type="repeat" description="ANK 4" evidence="2">
    <location>
        <begin position="562"/>
        <end position="592"/>
    </location>
</feature>
<feature type="repeat" description="ANK 5" evidence="2">
    <location>
        <begin position="596"/>
        <end position="625"/>
    </location>
</feature>
<feature type="repeat" description="ANK 6" evidence="2">
    <location>
        <begin position="629"/>
        <end position="658"/>
    </location>
</feature>
<feature type="repeat" description="ANK 7" evidence="2">
    <location>
        <begin position="664"/>
        <end position="694"/>
    </location>
</feature>
<feature type="repeat" description="ANK 8" evidence="2">
    <location>
        <begin position="699"/>
        <end position="729"/>
    </location>
</feature>
<feature type="repeat" description="ANK 9" evidence="2">
    <location>
        <begin position="733"/>
        <end position="762"/>
    </location>
</feature>
<feature type="repeat" description="ANK 10" evidence="2">
    <location>
        <begin position="766"/>
        <end position="795"/>
    </location>
</feature>
<feature type="repeat" description="ANK 11" evidence="2">
    <location>
        <begin position="799"/>
        <end position="828"/>
    </location>
</feature>
<feature type="repeat" description="ANK 12" evidence="2">
    <location>
        <begin position="832"/>
        <end position="861"/>
    </location>
</feature>
<feature type="repeat" description="ANK 13" evidence="2">
    <location>
        <begin position="866"/>
        <end position="895"/>
    </location>
</feature>
<feature type="repeat" description="ANK 14" evidence="2">
    <location>
        <begin position="899"/>
        <end position="928"/>
    </location>
</feature>
<feature type="repeat" description="ANK 15" evidence="2">
    <location>
        <begin position="965"/>
        <end position="995"/>
    </location>
</feature>
<feature type="repeat" description="ANK 16" evidence="2">
    <location>
        <begin position="996"/>
        <end position="1026"/>
    </location>
</feature>
<feature type="repeat" description="ANK 17" evidence="2">
    <location>
        <begin position="1031"/>
        <end position="1072"/>
    </location>
</feature>
<feature type="repeat" description="ANK 18" evidence="2">
    <location>
        <begin position="1077"/>
        <end position="1106"/>
    </location>
</feature>
<feature type="repeat" description="ANK 19" evidence="2">
    <location>
        <begin position="1109"/>
        <end position="1139"/>
    </location>
</feature>
<feature type="repeat" description="ANK 20" evidence="2">
    <location>
        <begin position="1143"/>
        <end position="1172"/>
    </location>
</feature>
<feature type="region of interest" description="Helix H8 is the probable transmembrane region of the tetrameric pore inserted in the target cell membrane" evidence="8">
    <location>
        <begin position="238"/>
        <end position="257"/>
    </location>
</feature>
<feature type="non-terminal residue">
    <location>
        <position position="1"/>
    </location>
</feature>
<keyword id="KW-0002">3D-structure</keyword>
<keyword id="KW-0040">ANK repeat</keyword>
<keyword id="KW-0165">Cleavage on pair of basic residues</keyword>
<keyword id="KW-0268">Exocytosis</keyword>
<keyword id="KW-0472">Membrane</keyword>
<keyword id="KW-0528">Neurotoxin</keyword>
<keyword id="KW-0638">Presynaptic neurotoxin</keyword>
<keyword id="KW-0677">Repeat</keyword>
<keyword id="KW-0964">Secreted</keyword>
<keyword id="KW-1052">Target cell membrane</keyword>
<keyword id="KW-1053">Target membrane</keyword>
<keyword id="KW-0800">Toxin</keyword>
<keyword id="KW-0812">Transmembrane</keyword>
<accession>Q9XZC0</accession>
<dbReference type="EMBL" id="AF134162">
    <property type="protein sequence ID" value="AAD33043.1"/>
    <property type="molecule type" value="Genomic_DNA"/>
</dbReference>
<dbReference type="PDB" id="7PTX">
    <property type="method" value="EM"/>
    <property type="resolution" value="4.03 A"/>
    <property type="chains" value="A=16-1211"/>
</dbReference>
<dbReference type="PDBsum" id="7PTX"/>
<dbReference type="EMDB" id="EMD-13642"/>
<dbReference type="SMR" id="Q9XZC0"/>
<dbReference type="ArachnoServer" id="AS000061">
    <property type="toxin name" value="alpha-Latrocrustotoxin-Lt1a"/>
</dbReference>
<dbReference type="GO" id="GO:0005576">
    <property type="term" value="C:extracellular region"/>
    <property type="evidence" value="ECO:0007669"/>
    <property type="project" value="UniProtKB-SubCell"/>
</dbReference>
<dbReference type="GO" id="GO:0044231">
    <property type="term" value="C:host cell presynaptic membrane"/>
    <property type="evidence" value="ECO:0007669"/>
    <property type="project" value="UniProtKB-KW"/>
</dbReference>
<dbReference type="GO" id="GO:0016020">
    <property type="term" value="C:membrane"/>
    <property type="evidence" value="ECO:0007669"/>
    <property type="project" value="UniProtKB-KW"/>
</dbReference>
<dbReference type="GO" id="GO:0044218">
    <property type="term" value="C:other organism cell membrane"/>
    <property type="evidence" value="ECO:0007669"/>
    <property type="project" value="UniProtKB-KW"/>
</dbReference>
<dbReference type="GO" id="GO:0090729">
    <property type="term" value="F:toxin activity"/>
    <property type="evidence" value="ECO:0007669"/>
    <property type="project" value="UniProtKB-KW"/>
</dbReference>
<dbReference type="GO" id="GO:0006887">
    <property type="term" value="P:exocytosis"/>
    <property type="evidence" value="ECO:0007669"/>
    <property type="project" value="UniProtKB-KW"/>
</dbReference>
<dbReference type="Gene3D" id="1.25.40.20">
    <property type="entry name" value="Ankyrin repeat-containing domain"/>
    <property type="match status" value="5"/>
</dbReference>
<dbReference type="InterPro" id="IPR002110">
    <property type="entry name" value="Ankyrin_rpt"/>
</dbReference>
<dbReference type="InterPro" id="IPR036770">
    <property type="entry name" value="Ankyrin_rpt-contain_sf"/>
</dbReference>
<dbReference type="PANTHER" id="PTHR24161">
    <property type="entry name" value="ANK_REP_REGION DOMAIN-CONTAINING PROTEIN-RELATED"/>
    <property type="match status" value="1"/>
</dbReference>
<dbReference type="PANTHER" id="PTHR24161:SF85">
    <property type="entry name" value="PALMITOYLTRANSFERASE HIP14"/>
    <property type="match status" value="1"/>
</dbReference>
<dbReference type="Pfam" id="PF12796">
    <property type="entry name" value="Ank_2"/>
    <property type="match status" value="7"/>
</dbReference>
<dbReference type="PRINTS" id="PR01415">
    <property type="entry name" value="ANKYRIN"/>
</dbReference>
<dbReference type="SMART" id="SM00248">
    <property type="entry name" value="ANK"/>
    <property type="match status" value="20"/>
</dbReference>
<dbReference type="SUPFAM" id="SSF48403">
    <property type="entry name" value="Ankyrin repeat"/>
    <property type="match status" value="3"/>
</dbReference>
<dbReference type="PROSITE" id="PS50297">
    <property type="entry name" value="ANK_REP_REGION"/>
    <property type="match status" value="1"/>
</dbReference>
<dbReference type="PROSITE" id="PS50088">
    <property type="entry name" value="ANK_REPEAT"/>
    <property type="match status" value="12"/>
</dbReference>
<protein>
    <recommendedName>
        <fullName evidence="6">Alpha-latrocrustotoxin-Lt1a</fullName>
        <shortName evidence="6">Alpha-LCT-Lt1a</shortName>
    </recommendedName>
    <alternativeName>
        <fullName evidence="5">Alpha-latrocrustotoxin</fullName>
        <shortName evidence="5">Alpha-LCT</shortName>
    </alternativeName>
    <alternativeName>
        <fullName>Crusta1</fullName>
    </alternativeName>
</protein>
<name>LCTA_LATTR</name>